<organism>
    <name type="scientific">Schizosaccharomyces pombe (strain 972 / ATCC 24843)</name>
    <name type="common">Fission yeast</name>
    <dbReference type="NCBI Taxonomy" id="284812"/>
    <lineage>
        <taxon>Eukaryota</taxon>
        <taxon>Fungi</taxon>
        <taxon>Dikarya</taxon>
        <taxon>Ascomycota</taxon>
        <taxon>Taphrinomycotina</taxon>
        <taxon>Schizosaccharomycetes</taxon>
        <taxon>Schizosaccharomycetales</taxon>
        <taxon>Schizosaccharomycetaceae</taxon>
        <taxon>Schizosaccharomyces</taxon>
    </lineage>
</organism>
<protein>
    <recommendedName>
        <fullName>Probable mitochondrial ATPase complex subunit atp10</fullName>
    </recommendedName>
</protein>
<reference key="1">
    <citation type="journal article" date="2002" name="Nature">
        <title>The genome sequence of Schizosaccharomyces pombe.</title>
        <authorList>
            <person name="Wood V."/>
            <person name="Gwilliam R."/>
            <person name="Rajandream M.A."/>
            <person name="Lyne M.H."/>
            <person name="Lyne R."/>
            <person name="Stewart A."/>
            <person name="Sgouros J.G."/>
            <person name="Peat N."/>
            <person name="Hayles J."/>
            <person name="Baker S.G."/>
            <person name="Basham D."/>
            <person name="Bowman S."/>
            <person name="Brooks K."/>
            <person name="Brown D."/>
            <person name="Brown S."/>
            <person name="Chillingworth T."/>
            <person name="Churcher C.M."/>
            <person name="Collins M."/>
            <person name="Connor R."/>
            <person name="Cronin A."/>
            <person name="Davis P."/>
            <person name="Feltwell T."/>
            <person name="Fraser A."/>
            <person name="Gentles S."/>
            <person name="Goble A."/>
            <person name="Hamlin N."/>
            <person name="Harris D.E."/>
            <person name="Hidalgo J."/>
            <person name="Hodgson G."/>
            <person name="Holroyd S."/>
            <person name="Hornsby T."/>
            <person name="Howarth S."/>
            <person name="Huckle E.J."/>
            <person name="Hunt S."/>
            <person name="Jagels K."/>
            <person name="James K.D."/>
            <person name="Jones L."/>
            <person name="Jones M."/>
            <person name="Leather S."/>
            <person name="McDonald S."/>
            <person name="McLean J."/>
            <person name="Mooney P."/>
            <person name="Moule S."/>
            <person name="Mungall K.L."/>
            <person name="Murphy L.D."/>
            <person name="Niblett D."/>
            <person name="Odell C."/>
            <person name="Oliver K."/>
            <person name="O'Neil S."/>
            <person name="Pearson D."/>
            <person name="Quail M.A."/>
            <person name="Rabbinowitsch E."/>
            <person name="Rutherford K.M."/>
            <person name="Rutter S."/>
            <person name="Saunders D."/>
            <person name="Seeger K."/>
            <person name="Sharp S."/>
            <person name="Skelton J."/>
            <person name="Simmonds M.N."/>
            <person name="Squares R."/>
            <person name="Squares S."/>
            <person name="Stevens K."/>
            <person name="Taylor K."/>
            <person name="Taylor R.G."/>
            <person name="Tivey A."/>
            <person name="Walsh S.V."/>
            <person name="Warren T."/>
            <person name="Whitehead S."/>
            <person name="Woodward J.R."/>
            <person name="Volckaert G."/>
            <person name="Aert R."/>
            <person name="Robben J."/>
            <person name="Grymonprez B."/>
            <person name="Weltjens I."/>
            <person name="Vanstreels E."/>
            <person name="Rieger M."/>
            <person name="Schaefer M."/>
            <person name="Mueller-Auer S."/>
            <person name="Gabel C."/>
            <person name="Fuchs M."/>
            <person name="Duesterhoeft A."/>
            <person name="Fritzc C."/>
            <person name="Holzer E."/>
            <person name="Moestl D."/>
            <person name="Hilbert H."/>
            <person name="Borzym K."/>
            <person name="Langer I."/>
            <person name="Beck A."/>
            <person name="Lehrach H."/>
            <person name="Reinhardt R."/>
            <person name="Pohl T.M."/>
            <person name="Eger P."/>
            <person name="Zimmermann W."/>
            <person name="Wedler H."/>
            <person name="Wambutt R."/>
            <person name="Purnelle B."/>
            <person name="Goffeau A."/>
            <person name="Cadieu E."/>
            <person name="Dreano S."/>
            <person name="Gloux S."/>
            <person name="Lelaure V."/>
            <person name="Mottier S."/>
            <person name="Galibert F."/>
            <person name="Aves S.J."/>
            <person name="Xiang Z."/>
            <person name="Hunt C."/>
            <person name="Moore K."/>
            <person name="Hurst S.M."/>
            <person name="Lucas M."/>
            <person name="Rochet M."/>
            <person name="Gaillardin C."/>
            <person name="Tallada V.A."/>
            <person name="Garzon A."/>
            <person name="Thode G."/>
            <person name="Daga R.R."/>
            <person name="Cruzado L."/>
            <person name="Jimenez J."/>
            <person name="Sanchez M."/>
            <person name="del Rey F."/>
            <person name="Benito J."/>
            <person name="Dominguez A."/>
            <person name="Revuelta J.L."/>
            <person name="Moreno S."/>
            <person name="Armstrong J."/>
            <person name="Forsburg S.L."/>
            <person name="Cerutti L."/>
            <person name="Lowe T."/>
            <person name="McCombie W.R."/>
            <person name="Paulsen I."/>
            <person name="Potashkin J."/>
            <person name="Shpakovski G.V."/>
            <person name="Ussery D."/>
            <person name="Barrell B.G."/>
            <person name="Nurse P."/>
        </authorList>
    </citation>
    <scope>NUCLEOTIDE SEQUENCE [LARGE SCALE GENOMIC DNA]</scope>
    <source>
        <strain>972 / ATCC 24843</strain>
    </source>
</reference>
<dbReference type="EMBL" id="CU329670">
    <property type="protein sequence ID" value="CAA91212.1"/>
    <property type="molecule type" value="Genomic_DNA"/>
</dbReference>
<dbReference type="PIR" id="T38856">
    <property type="entry name" value="S62488"/>
</dbReference>
<dbReference type="RefSeq" id="NP_593071.1">
    <property type="nucleotide sequence ID" value="NM_001018469.2"/>
</dbReference>
<dbReference type="BioGRID" id="279263">
    <property type="interactions" value="59"/>
</dbReference>
<dbReference type="FunCoup" id="Q09836">
    <property type="interactions" value="52"/>
</dbReference>
<dbReference type="STRING" id="284812.Q09836"/>
<dbReference type="iPTMnet" id="Q09836"/>
<dbReference type="PaxDb" id="4896-SPAC4G8.11c.1"/>
<dbReference type="EnsemblFungi" id="SPAC4G8.11c.1">
    <property type="protein sequence ID" value="SPAC4G8.11c.1:pep"/>
    <property type="gene ID" value="SPAC4G8.11c"/>
</dbReference>
<dbReference type="GeneID" id="2542816"/>
<dbReference type="KEGG" id="spo:2542816"/>
<dbReference type="PomBase" id="SPAC4G8.11c">
    <property type="gene designation" value="atp10"/>
</dbReference>
<dbReference type="VEuPathDB" id="FungiDB:SPAC4G8.11c"/>
<dbReference type="eggNOG" id="KOG4614">
    <property type="taxonomic scope" value="Eukaryota"/>
</dbReference>
<dbReference type="HOGENOM" id="CLU_047290_0_1_1"/>
<dbReference type="InParanoid" id="Q09836"/>
<dbReference type="OMA" id="YFPNFHG"/>
<dbReference type="PhylomeDB" id="Q09836"/>
<dbReference type="PRO" id="PR:Q09836"/>
<dbReference type="Proteomes" id="UP000002485">
    <property type="component" value="Chromosome I"/>
</dbReference>
<dbReference type="GO" id="GO:0005743">
    <property type="term" value="C:mitochondrial inner membrane"/>
    <property type="evidence" value="ECO:0000318"/>
    <property type="project" value="GO_Central"/>
</dbReference>
<dbReference type="GO" id="GO:0005739">
    <property type="term" value="C:mitochondrion"/>
    <property type="evidence" value="ECO:0007005"/>
    <property type="project" value="PomBase"/>
</dbReference>
<dbReference type="GO" id="GO:0051082">
    <property type="term" value="F:unfolded protein binding"/>
    <property type="evidence" value="ECO:0000266"/>
    <property type="project" value="PomBase"/>
</dbReference>
<dbReference type="GO" id="GO:0033615">
    <property type="term" value="P:mitochondrial proton-transporting ATP synthase complex assembly"/>
    <property type="evidence" value="ECO:0000318"/>
    <property type="project" value="GO_Central"/>
</dbReference>
<dbReference type="InterPro" id="IPR007849">
    <property type="entry name" value="ATP10"/>
</dbReference>
<dbReference type="PANTHER" id="PTHR28106">
    <property type="entry name" value="MITOCHONDRIAL ATPASE COMPLEX SUBUNIT ATP10"/>
    <property type="match status" value="1"/>
</dbReference>
<dbReference type="PANTHER" id="PTHR28106:SF1">
    <property type="entry name" value="MITOCHONDRIAL ATPASE COMPLEX SUBUNIT ATP10"/>
    <property type="match status" value="1"/>
</dbReference>
<dbReference type="Pfam" id="PF05176">
    <property type="entry name" value="ATP-synt_10"/>
    <property type="match status" value="1"/>
</dbReference>
<evidence type="ECO:0000250" key="1"/>
<evidence type="ECO:0000305" key="2"/>
<feature type="chain" id="PRO_0000071726" description="Probable mitochondrial ATPase complex subunit atp10">
    <location>
        <begin position="1"/>
        <end position="267"/>
    </location>
</feature>
<comment type="function">
    <text evidence="1">Involved in assembly of the mitochondrial F1-F0 complex.</text>
</comment>
<comment type="subcellular location">
    <subcellularLocation>
        <location evidence="1">Mitochondrion inner membrane</location>
    </subcellularLocation>
</comment>
<comment type="similarity">
    <text evidence="2">Belongs to the ATP10 family.</text>
</comment>
<sequence length="267" mass="31381">MAYNYLKNLVIPRLIVKHQFKLRSFSTKSLNDTKEKAPSALIPVGLLVKPTMLSEVQKPTLWEKLTKPASTSSPEQRQKELLNEMKRSTIQDFNEVRRFNGKLFYSPPRLFKEKSALWMYNFHGKSLRNQYKELYKDWQGSPFFFALFSNAFGENQCRNWIQHLAPFDYLPVRYANVQSNLIKYWLQKIFIGKVKRSIPEKCWNEYITAYDNKFSFPEIGWNNKLVGNVYLIDDSCKIRWLGTGDPTNVEIENLKTAIKFLVNKNVG</sequence>
<gene>
    <name type="primary">atp10</name>
    <name type="ORF">SPAC4G8.11c</name>
</gene>
<proteinExistence type="inferred from homology"/>
<accession>Q09836</accession>
<name>ATP10_SCHPO</name>
<keyword id="KW-0472">Membrane</keyword>
<keyword id="KW-0496">Mitochondrion</keyword>
<keyword id="KW-0999">Mitochondrion inner membrane</keyword>
<keyword id="KW-1185">Reference proteome</keyword>